<dbReference type="EC" id="7.1.1.-" evidence="1"/>
<dbReference type="EMBL" id="AB237912">
    <property type="protein sequence ID" value="BAE46655.1"/>
    <property type="status" value="ALT_INIT"/>
    <property type="molecule type" value="Genomic_DNA"/>
</dbReference>
<dbReference type="RefSeq" id="YP_358680.2">
    <property type="nucleotide sequence ID" value="NC_007500.1"/>
</dbReference>
<dbReference type="SMR" id="Q3C1J8"/>
<dbReference type="GeneID" id="3735069"/>
<dbReference type="KEGG" id="nsy:3735069"/>
<dbReference type="OrthoDB" id="21285at4085"/>
<dbReference type="Proteomes" id="UP000189701">
    <property type="component" value="Chloroplast Pltd"/>
</dbReference>
<dbReference type="GO" id="GO:0009535">
    <property type="term" value="C:chloroplast thylakoid membrane"/>
    <property type="evidence" value="ECO:0007669"/>
    <property type="project" value="UniProtKB-SubCell"/>
</dbReference>
<dbReference type="GO" id="GO:0045271">
    <property type="term" value="C:respiratory chain complex I"/>
    <property type="evidence" value="ECO:0007669"/>
    <property type="project" value="TreeGrafter"/>
</dbReference>
<dbReference type="GO" id="GO:0051539">
    <property type="term" value="F:4 iron, 4 sulfur cluster binding"/>
    <property type="evidence" value="ECO:0007669"/>
    <property type="project" value="UniProtKB-KW"/>
</dbReference>
<dbReference type="GO" id="GO:0005506">
    <property type="term" value="F:iron ion binding"/>
    <property type="evidence" value="ECO:0007669"/>
    <property type="project" value="UniProtKB-UniRule"/>
</dbReference>
<dbReference type="GO" id="GO:0008137">
    <property type="term" value="F:NADH dehydrogenase (ubiquinone) activity"/>
    <property type="evidence" value="ECO:0007669"/>
    <property type="project" value="InterPro"/>
</dbReference>
<dbReference type="GO" id="GO:0048038">
    <property type="term" value="F:quinone binding"/>
    <property type="evidence" value="ECO:0007669"/>
    <property type="project" value="UniProtKB-KW"/>
</dbReference>
<dbReference type="GO" id="GO:0009060">
    <property type="term" value="P:aerobic respiration"/>
    <property type="evidence" value="ECO:0007669"/>
    <property type="project" value="TreeGrafter"/>
</dbReference>
<dbReference type="GO" id="GO:0015990">
    <property type="term" value="P:electron transport coupled proton transport"/>
    <property type="evidence" value="ECO:0007669"/>
    <property type="project" value="TreeGrafter"/>
</dbReference>
<dbReference type="GO" id="GO:0019684">
    <property type="term" value="P:photosynthesis, light reaction"/>
    <property type="evidence" value="ECO:0007669"/>
    <property type="project" value="UniProtKB-UniRule"/>
</dbReference>
<dbReference type="FunFam" id="3.40.50.12280:FF:000003">
    <property type="entry name" value="NAD(P)H-quinone oxidoreductase subunit K, chloroplastic"/>
    <property type="match status" value="1"/>
</dbReference>
<dbReference type="Gene3D" id="3.40.50.12280">
    <property type="match status" value="1"/>
</dbReference>
<dbReference type="HAMAP" id="MF_01356">
    <property type="entry name" value="NDH1_NuoB"/>
    <property type="match status" value="1"/>
</dbReference>
<dbReference type="InterPro" id="IPR006137">
    <property type="entry name" value="NADH_UbQ_OxRdtase-like_20kDa"/>
</dbReference>
<dbReference type="InterPro" id="IPR006138">
    <property type="entry name" value="NADH_UQ_OxRdtase_20Kd_su"/>
</dbReference>
<dbReference type="NCBIfam" id="TIGR01957">
    <property type="entry name" value="nuoB_fam"/>
    <property type="match status" value="1"/>
</dbReference>
<dbReference type="NCBIfam" id="NF005012">
    <property type="entry name" value="PRK06411.1"/>
    <property type="match status" value="1"/>
</dbReference>
<dbReference type="PANTHER" id="PTHR11995">
    <property type="entry name" value="NADH DEHYDROGENASE"/>
    <property type="match status" value="1"/>
</dbReference>
<dbReference type="PANTHER" id="PTHR11995:SF14">
    <property type="entry name" value="NADH DEHYDROGENASE [UBIQUINONE] IRON-SULFUR PROTEIN 7, MITOCHONDRIAL"/>
    <property type="match status" value="1"/>
</dbReference>
<dbReference type="Pfam" id="PF01058">
    <property type="entry name" value="Oxidored_q6"/>
    <property type="match status" value="1"/>
</dbReference>
<dbReference type="SUPFAM" id="SSF56770">
    <property type="entry name" value="HydA/Nqo6-like"/>
    <property type="match status" value="1"/>
</dbReference>
<dbReference type="PROSITE" id="PS01150">
    <property type="entry name" value="COMPLEX1_20K"/>
    <property type="match status" value="1"/>
</dbReference>
<feature type="chain" id="PRO_0000358563" description="NAD(P)H-quinone oxidoreductase subunit K, chloroplastic">
    <location>
        <begin position="1"/>
        <end position="225"/>
    </location>
</feature>
<feature type="binding site" evidence="1">
    <location>
        <position position="43"/>
    </location>
    <ligand>
        <name>[4Fe-4S] cluster</name>
        <dbReference type="ChEBI" id="CHEBI:49883"/>
    </ligand>
</feature>
<feature type="binding site" evidence="1">
    <location>
        <position position="44"/>
    </location>
    <ligand>
        <name>[4Fe-4S] cluster</name>
        <dbReference type="ChEBI" id="CHEBI:49883"/>
    </ligand>
</feature>
<feature type="binding site" evidence="1">
    <location>
        <position position="108"/>
    </location>
    <ligand>
        <name>[4Fe-4S] cluster</name>
        <dbReference type="ChEBI" id="CHEBI:49883"/>
    </ligand>
</feature>
<feature type="binding site" evidence="1">
    <location>
        <position position="139"/>
    </location>
    <ligand>
        <name>[4Fe-4S] cluster</name>
        <dbReference type="ChEBI" id="CHEBI:49883"/>
    </ligand>
</feature>
<proteinExistence type="inferred from homology"/>
<evidence type="ECO:0000255" key="1">
    <source>
        <dbReference type="HAMAP-Rule" id="MF_01356"/>
    </source>
</evidence>
<evidence type="ECO:0000305" key="2"/>
<organism>
    <name type="scientific">Nicotiana sylvestris</name>
    <name type="common">Wood tobacco</name>
    <name type="synonym">South American tobacco</name>
    <dbReference type="NCBI Taxonomy" id="4096"/>
    <lineage>
        <taxon>Eukaryota</taxon>
        <taxon>Viridiplantae</taxon>
        <taxon>Streptophyta</taxon>
        <taxon>Embryophyta</taxon>
        <taxon>Tracheophyta</taxon>
        <taxon>Spermatophyta</taxon>
        <taxon>Magnoliopsida</taxon>
        <taxon>eudicotyledons</taxon>
        <taxon>Gunneridae</taxon>
        <taxon>Pentapetalae</taxon>
        <taxon>asterids</taxon>
        <taxon>lamiids</taxon>
        <taxon>Solanales</taxon>
        <taxon>Solanaceae</taxon>
        <taxon>Nicotianoideae</taxon>
        <taxon>Nicotianeae</taxon>
        <taxon>Nicotiana</taxon>
    </lineage>
</organism>
<sequence length="225" mass="25472">MNSIQFPLLDRTTQNSVISTTLNDLSNWSRLSSLWPLLYGTSCCFIEFASLIGSRFDFDRYGLVPRSSPRQADLILTAGTVTMKMAPSLVRLYEQMPEPKYVIAMGACTITGGMFSTDSYSTVRGVDKLIPVDVYLPGCPPKPEAVIDAITKLRKKISRELYEDRIRSQRANRCFTTNHKFHVQHSIHTGNYDQRVLYQPPSTSEIPTEIFFKYKNSVSSPELVN</sequence>
<gene>
    <name evidence="1" type="primary">ndhK</name>
</gene>
<comment type="function">
    <text evidence="1">NDH shuttles electrons from NAD(P)H:plastoquinone, via FMN and iron-sulfur (Fe-S) centers, to quinones in the photosynthetic chain and possibly in a chloroplast respiratory chain. The immediate electron acceptor for the enzyme in this species is believed to be plastoquinone. Couples the redox reaction to proton translocation, and thus conserves the redox energy in a proton gradient.</text>
</comment>
<comment type="catalytic activity">
    <reaction evidence="1">
        <text>a plastoquinone + NADH + (n+1) H(+)(in) = a plastoquinol + NAD(+) + n H(+)(out)</text>
        <dbReference type="Rhea" id="RHEA:42608"/>
        <dbReference type="Rhea" id="RHEA-COMP:9561"/>
        <dbReference type="Rhea" id="RHEA-COMP:9562"/>
        <dbReference type="ChEBI" id="CHEBI:15378"/>
        <dbReference type="ChEBI" id="CHEBI:17757"/>
        <dbReference type="ChEBI" id="CHEBI:57540"/>
        <dbReference type="ChEBI" id="CHEBI:57945"/>
        <dbReference type="ChEBI" id="CHEBI:62192"/>
    </reaction>
</comment>
<comment type="catalytic activity">
    <reaction evidence="1">
        <text>a plastoquinone + NADPH + (n+1) H(+)(in) = a plastoquinol + NADP(+) + n H(+)(out)</text>
        <dbReference type="Rhea" id="RHEA:42612"/>
        <dbReference type="Rhea" id="RHEA-COMP:9561"/>
        <dbReference type="Rhea" id="RHEA-COMP:9562"/>
        <dbReference type="ChEBI" id="CHEBI:15378"/>
        <dbReference type="ChEBI" id="CHEBI:17757"/>
        <dbReference type="ChEBI" id="CHEBI:57783"/>
        <dbReference type="ChEBI" id="CHEBI:58349"/>
        <dbReference type="ChEBI" id="CHEBI:62192"/>
    </reaction>
</comment>
<comment type="cofactor">
    <cofactor evidence="1">
        <name>[4Fe-4S] cluster</name>
        <dbReference type="ChEBI" id="CHEBI:49883"/>
    </cofactor>
    <text evidence="1">Binds 1 [4Fe-4S] cluster.</text>
</comment>
<comment type="subunit">
    <text evidence="1">NDH is composed of at least 16 different subunits, 5 of which are encoded in the nucleus.</text>
</comment>
<comment type="subcellular location">
    <subcellularLocation>
        <location evidence="1">Plastid</location>
        <location evidence="1">Chloroplast thylakoid membrane</location>
        <topology evidence="1">Peripheral membrane protein</topology>
        <orientation evidence="1">Stromal side</orientation>
    </subcellularLocation>
</comment>
<comment type="similarity">
    <text evidence="1">Belongs to the complex I 20 kDa subunit family.</text>
</comment>
<comment type="sequence caution" evidence="2">
    <conflict type="erroneous initiation">
        <sequence resource="EMBL-CDS" id="BAE46655"/>
    </conflict>
</comment>
<accession>Q3C1J8</accession>
<keyword id="KW-0004">4Fe-4S</keyword>
<keyword id="KW-0150">Chloroplast</keyword>
<keyword id="KW-0408">Iron</keyword>
<keyword id="KW-0411">Iron-sulfur</keyword>
<keyword id="KW-0472">Membrane</keyword>
<keyword id="KW-0479">Metal-binding</keyword>
<keyword id="KW-0520">NAD</keyword>
<keyword id="KW-0521">NADP</keyword>
<keyword id="KW-0934">Plastid</keyword>
<keyword id="KW-0618">Plastoquinone</keyword>
<keyword id="KW-0874">Quinone</keyword>
<keyword id="KW-1185">Reference proteome</keyword>
<keyword id="KW-0793">Thylakoid</keyword>
<keyword id="KW-1278">Translocase</keyword>
<keyword id="KW-0813">Transport</keyword>
<protein>
    <recommendedName>
        <fullName evidence="1">NAD(P)H-quinone oxidoreductase subunit K, chloroplastic</fullName>
        <ecNumber evidence="1">7.1.1.-</ecNumber>
    </recommendedName>
    <alternativeName>
        <fullName evidence="1">NAD(P)H dehydrogenase subunit K</fullName>
    </alternativeName>
    <alternativeName>
        <fullName evidence="1">NADH-plastoquinone oxidoreductase subunit K</fullName>
    </alternativeName>
</protein>
<geneLocation type="chloroplast"/>
<reference key="1">
    <citation type="journal article" date="2006" name="Mol. Genet. Genomics">
        <title>The chloroplast genome of Nicotiana sylvestris and Nicotiana tomentosiformis: complete sequencing confirms that the Nicotiana sylvestris progenitor is the maternal genome donor of Nicotiana tabacum.</title>
        <authorList>
            <person name="Yukawa M."/>
            <person name="Tsudzuki T."/>
            <person name="Sugiura M."/>
        </authorList>
    </citation>
    <scope>NUCLEOTIDE SEQUENCE [LARGE SCALE GENOMIC DNA]</scope>
</reference>
<name>NDHK_NICSY</name>